<sequence length="146" mass="16135">MTLTKGSFTYSSGEEYRGEWKEGRRHGFGQLMFADGGTYLGHFENGLFNGFGVLTFSDGSRYEGEFAQGKFNGVGVFIRHDNMTFEGEFKNGRVDGLGLLTFPDGSHGIPRNEGLFENNKLLRREKCSAVVQRAQSASKSARSLTA</sequence>
<name>MORN4_BOVIN</name>
<protein>
    <recommendedName>
        <fullName>MORN repeat-containing protein 4</fullName>
    </recommendedName>
    <alternativeName>
        <fullName evidence="4">Retinophilin</fullName>
    </alternativeName>
</protein>
<organism>
    <name type="scientific">Bos taurus</name>
    <name type="common">Bovine</name>
    <dbReference type="NCBI Taxonomy" id="9913"/>
    <lineage>
        <taxon>Eukaryota</taxon>
        <taxon>Metazoa</taxon>
        <taxon>Chordata</taxon>
        <taxon>Craniata</taxon>
        <taxon>Vertebrata</taxon>
        <taxon>Euteleostomi</taxon>
        <taxon>Mammalia</taxon>
        <taxon>Eutheria</taxon>
        <taxon>Laurasiatheria</taxon>
        <taxon>Artiodactyla</taxon>
        <taxon>Ruminantia</taxon>
        <taxon>Pecora</taxon>
        <taxon>Bovidae</taxon>
        <taxon>Bovinae</taxon>
        <taxon>Bos</taxon>
    </lineage>
</organism>
<feature type="chain" id="PRO_0000279487" description="MORN repeat-containing protein 4">
    <location>
        <begin position="1"/>
        <end position="146"/>
    </location>
</feature>
<feature type="repeat" description="MORN 1">
    <location>
        <begin position="16"/>
        <end position="38"/>
    </location>
</feature>
<feature type="repeat" description="MORN 2">
    <location>
        <begin position="39"/>
        <end position="61"/>
    </location>
</feature>
<feature type="repeat" description="MORN 3">
    <location>
        <begin position="62"/>
        <end position="84"/>
    </location>
</feature>
<feature type="repeat" description="MORN 4">
    <location>
        <begin position="85"/>
        <end position="107"/>
    </location>
</feature>
<feature type="sequence conflict" description="In Ref. 1; AAX08854." evidence="5" ref="1">
    <original>E</original>
    <variation>D</variation>
    <location>
        <position position="88"/>
    </location>
</feature>
<accession>Q0VD26</accession>
<accession>Q5E9T3</accession>
<dbReference type="EMBL" id="BT020837">
    <property type="protein sequence ID" value="AAX08854.1"/>
    <property type="molecule type" value="mRNA"/>
</dbReference>
<dbReference type="EMBL" id="BC119872">
    <property type="protein sequence ID" value="AAI19873.1"/>
    <property type="molecule type" value="mRNA"/>
</dbReference>
<dbReference type="RefSeq" id="NP_001030527.1">
    <property type="nucleotide sequence ID" value="NM_001035450.1"/>
</dbReference>
<dbReference type="RefSeq" id="XP_005225677.1">
    <property type="nucleotide sequence ID" value="XM_005225620.5"/>
</dbReference>
<dbReference type="RefSeq" id="XP_024841563.1">
    <property type="nucleotide sequence ID" value="XM_024985795.2"/>
</dbReference>
<dbReference type="RefSeq" id="XP_024841564.1">
    <property type="nucleotide sequence ID" value="XM_024985796.2"/>
</dbReference>
<dbReference type="SMR" id="Q0VD26"/>
<dbReference type="FunCoup" id="Q0VD26">
    <property type="interactions" value="1827"/>
</dbReference>
<dbReference type="STRING" id="9913.ENSBTAP00000014795"/>
<dbReference type="PaxDb" id="9913-ENSBTAP00000014795"/>
<dbReference type="Ensembl" id="ENSBTAT00000131258.1">
    <property type="protein sequence ID" value="ENSBTAP00000088973.1"/>
    <property type="gene ID" value="ENSBTAG00000011137.7"/>
</dbReference>
<dbReference type="GeneID" id="614519"/>
<dbReference type="KEGG" id="bta:614519"/>
<dbReference type="CTD" id="118812"/>
<dbReference type="VEuPathDB" id="HostDB:ENSBTAG00000011137"/>
<dbReference type="VGNC" id="VGNC:31561">
    <property type="gene designation" value="MORN4"/>
</dbReference>
<dbReference type="eggNOG" id="KOG0231">
    <property type="taxonomic scope" value="Eukaryota"/>
</dbReference>
<dbReference type="GeneTree" id="ENSGT00730000111173"/>
<dbReference type="HOGENOM" id="CLU_113346_0_0_1"/>
<dbReference type="InParanoid" id="Q0VD26"/>
<dbReference type="OMA" id="FTRCDGM"/>
<dbReference type="OrthoDB" id="406044at2759"/>
<dbReference type="TreeFam" id="TF323893"/>
<dbReference type="Proteomes" id="UP000009136">
    <property type="component" value="Chromosome 26"/>
</dbReference>
<dbReference type="Bgee" id="ENSBTAG00000011137">
    <property type="expression patterns" value="Expressed in floor plate of diencephalon and 105 other cell types or tissues"/>
</dbReference>
<dbReference type="GO" id="GO:0042995">
    <property type="term" value="C:cell projection"/>
    <property type="evidence" value="ECO:0000318"/>
    <property type="project" value="GO_Central"/>
</dbReference>
<dbReference type="GO" id="GO:0005737">
    <property type="term" value="C:cytoplasm"/>
    <property type="evidence" value="ECO:0000250"/>
    <property type="project" value="UniProtKB"/>
</dbReference>
<dbReference type="GO" id="GO:0032433">
    <property type="term" value="C:filopodium tip"/>
    <property type="evidence" value="ECO:0000250"/>
    <property type="project" value="UniProtKB"/>
</dbReference>
<dbReference type="GO" id="GO:0032426">
    <property type="term" value="C:stereocilium tip"/>
    <property type="evidence" value="ECO:0000250"/>
    <property type="project" value="UniProtKB"/>
</dbReference>
<dbReference type="GO" id="GO:0048678">
    <property type="term" value="P:response to axon injury"/>
    <property type="evidence" value="ECO:0000250"/>
    <property type="project" value="UniProtKB"/>
</dbReference>
<dbReference type="FunFam" id="2.20.110.10:FF:000011">
    <property type="entry name" value="MORN repeat-containing protein 4"/>
    <property type="match status" value="1"/>
</dbReference>
<dbReference type="FunFam" id="2.20.110.10:FF:000014">
    <property type="entry name" value="MORN repeat-containing protein 4"/>
    <property type="match status" value="1"/>
</dbReference>
<dbReference type="Gene3D" id="2.20.110.10">
    <property type="entry name" value="Histone H3 K4-specific methyltransferase SET7/9 N-terminal domain"/>
    <property type="match status" value="2"/>
</dbReference>
<dbReference type="InterPro" id="IPR003409">
    <property type="entry name" value="MORN"/>
</dbReference>
<dbReference type="InterPro" id="IPR052315">
    <property type="entry name" value="MORN4"/>
</dbReference>
<dbReference type="PANTHER" id="PTHR46614">
    <property type="entry name" value="MORN REPEAT-CONTAINING PROTEIN 4"/>
    <property type="match status" value="1"/>
</dbReference>
<dbReference type="PANTHER" id="PTHR46614:SF1">
    <property type="entry name" value="MORN REPEAT-CONTAINING PROTEIN 4"/>
    <property type="match status" value="1"/>
</dbReference>
<dbReference type="Pfam" id="PF02493">
    <property type="entry name" value="MORN"/>
    <property type="match status" value="4"/>
</dbReference>
<dbReference type="SMART" id="SM00698">
    <property type="entry name" value="MORN"/>
    <property type="match status" value="4"/>
</dbReference>
<dbReference type="SUPFAM" id="SSF82185">
    <property type="entry name" value="Histone H3 K4-specific methyltransferase SET7/9 N-terminal domain"/>
    <property type="match status" value="1"/>
</dbReference>
<keyword id="KW-0966">Cell projection</keyword>
<keyword id="KW-0963">Cytoplasm</keyword>
<keyword id="KW-1185">Reference proteome</keyword>
<keyword id="KW-0677">Repeat</keyword>
<reference key="1">
    <citation type="journal article" date="2005" name="BMC Genomics">
        <title>Characterization of 954 bovine full-CDS cDNA sequences.</title>
        <authorList>
            <person name="Harhay G.P."/>
            <person name="Sonstegard T.S."/>
            <person name="Keele J.W."/>
            <person name="Heaton M.P."/>
            <person name="Clawson M.L."/>
            <person name="Snelling W.M."/>
            <person name="Wiedmann R.T."/>
            <person name="Van Tassell C.P."/>
            <person name="Smith T.P.L."/>
        </authorList>
    </citation>
    <scope>NUCLEOTIDE SEQUENCE [LARGE SCALE MRNA]</scope>
</reference>
<reference key="2">
    <citation type="submission" date="2006-08" db="EMBL/GenBank/DDBJ databases">
        <authorList>
            <consortium name="NIH - Mammalian Gene Collection (MGC) project"/>
        </authorList>
    </citation>
    <scope>NUCLEOTIDE SEQUENCE [LARGE SCALE MRNA]</scope>
    <source>
        <strain>Hereford</strain>
        <tissue>Thalamus</tissue>
    </source>
</reference>
<reference key="3">
    <citation type="journal article" date="2007" name="Mol. Genet. Genomics">
        <title>Drosophila retinophilin contains MORN repeats and is conserved in humans.</title>
        <authorList>
            <person name="Mecklenburg K.L."/>
        </authorList>
    </citation>
    <scope>TISSUE SPECIFICITY</scope>
</reference>
<comment type="function">
    <text evidence="1">Plays a role in promoting axonal degeneration following neuronal injury by toxic insult or trauma.</text>
</comment>
<comment type="subunit">
    <text evidence="2">Interacts with MYO3A.</text>
</comment>
<comment type="subcellular location">
    <subcellularLocation>
        <location evidence="2">Cytoplasm</location>
    </subcellularLocation>
    <subcellularLocation>
        <location evidence="2">Cell projection</location>
        <location evidence="2">Filopodium tip</location>
    </subcellularLocation>
    <subcellularLocation>
        <location evidence="1">Cell projection</location>
        <location evidence="1">Stereocilium</location>
    </subcellularLocation>
    <text evidence="2">Found in the cytoplasm in the absence of MYO3A and localizes at filopodial tips in the presence of MYO3A.</text>
</comment>
<comment type="tissue specificity">
    <text evidence="3">Retina.</text>
</comment>
<gene>
    <name type="primary">MORN4</name>
</gene>
<proteinExistence type="evidence at transcript level"/>
<evidence type="ECO:0000250" key="1">
    <source>
        <dbReference type="UniProtKB" id="Q6PGF2"/>
    </source>
</evidence>
<evidence type="ECO:0000250" key="2">
    <source>
        <dbReference type="UniProtKB" id="Q8NDC4"/>
    </source>
</evidence>
<evidence type="ECO:0000269" key="3">
    <source>
    </source>
</evidence>
<evidence type="ECO:0000303" key="4">
    <source>
    </source>
</evidence>
<evidence type="ECO:0000305" key="5"/>